<organism>
    <name type="scientific">Mus musculus</name>
    <name type="common">Mouse</name>
    <dbReference type="NCBI Taxonomy" id="10090"/>
    <lineage>
        <taxon>Eukaryota</taxon>
        <taxon>Metazoa</taxon>
        <taxon>Chordata</taxon>
        <taxon>Craniata</taxon>
        <taxon>Vertebrata</taxon>
        <taxon>Euteleostomi</taxon>
        <taxon>Mammalia</taxon>
        <taxon>Eutheria</taxon>
        <taxon>Euarchontoglires</taxon>
        <taxon>Glires</taxon>
        <taxon>Rodentia</taxon>
        <taxon>Myomorpha</taxon>
        <taxon>Muroidea</taxon>
        <taxon>Muridae</taxon>
        <taxon>Murinae</taxon>
        <taxon>Mus</taxon>
        <taxon>Mus</taxon>
    </lineage>
</organism>
<reference key="1">
    <citation type="journal article" date="2002" name="Gene">
        <title>Mouse cytosolic and mitochondrial deoxyribonucleotidases: cDNA cloning of the mitochondrial enzyme, gene structures, chromosomal mapping and comparison with the human orthologs.</title>
        <authorList>
            <person name="Rampazzo C."/>
            <person name="Kost-Alimova M."/>
            <person name="Ruzzenente B."/>
            <person name="Dumanski J.P."/>
            <person name="Bianchi V."/>
        </authorList>
    </citation>
    <scope>NUCLEOTIDE SEQUENCE [MRNA]</scope>
    <scope>FUNCTION</scope>
    <source>
        <tissue>Diaphragm</tissue>
    </source>
</reference>
<reference key="2">
    <citation type="journal article" date="2004" name="Genome Res.">
        <title>The status, quality, and expansion of the NIH full-length cDNA project: the Mammalian Gene Collection (MGC).</title>
        <authorList>
            <consortium name="The MGC Project Team"/>
        </authorList>
    </citation>
    <scope>NUCLEOTIDE SEQUENCE [LARGE SCALE MRNA]</scope>
    <source>
        <tissue>Mammary tumor</tissue>
    </source>
</reference>
<reference key="3">
    <citation type="journal article" date="2010" name="Cell">
        <title>A tissue-specific atlas of mouse protein phosphorylation and expression.</title>
        <authorList>
            <person name="Huttlin E.L."/>
            <person name="Jedrychowski M.P."/>
            <person name="Elias J.E."/>
            <person name="Goswami T."/>
            <person name="Rad R."/>
            <person name="Beausoleil S.A."/>
            <person name="Villen J."/>
            <person name="Haas W."/>
            <person name="Sowa M.E."/>
            <person name="Gygi S.P."/>
        </authorList>
    </citation>
    <scope>IDENTIFICATION BY MASS SPECTROMETRY [LARGE SCALE ANALYSIS]</scope>
    <source>
        <tissue>Brain</tissue>
    </source>
</reference>
<keyword id="KW-0378">Hydrolase</keyword>
<keyword id="KW-0460">Magnesium</keyword>
<keyword id="KW-0479">Metal-binding</keyword>
<keyword id="KW-0496">Mitochondrion</keyword>
<keyword id="KW-0546">Nucleotide metabolism</keyword>
<keyword id="KW-0547">Nucleotide-binding</keyword>
<keyword id="KW-1185">Reference proteome</keyword>
<keyword id="KW-0809">Transit peptide</keyword>
<feature type="transit peptide" description="Mitochondrion" evidence="2">
    <location>
        <begin position="1"/>
        <end position="23"/>
    </location>
</feature>
<feature type="chain" id="PRO_0000000012" description="5'(3')-deoxyribonucleotidase, mitochondrial">
    <location>
        <begin position="24"/>
        <end position="220"/>
    </location>
</feature>
<feature type="active site" description="Nucleophile" evidence="1">
    <location>
        <position position="33"/>
    </location>
</feature>
<feature type="active site" description="Proton donor" evidence="1">
    <location>
        <position position="35"/>
    </location>
</feature>
<feature type="binding site" evidence="1">
    <location>
        <position position="33"/>
    </location>
    <ligand>
        <name>Mg(2+)</name>
        <dbReference type="ChEBI" id="CHEBI:18420"/>
    </ligand>
</feature>
<feature type="binding site" evidence="1">
    <location>
        <position position="35"/>
    </location>
    <ligand>
        <name>Mg(2+)</name>
        <dbReference type="ChEBI" id="CHEBI:18420"/>
    </ligand>
</feature>
<feature type="binding site" evidence="1">
    <location>
        <position position="35"/>
    </location>
    <ligand>
        <name>substrate</name>
    </ligand>
</feature>
<feature type="binding site" evidence="1">
    <location>
        <position position="41"/>
    </location>
    <ligand>
        <name>substrate</name>
    </ligand>
</feature>
<feature type="binding site" evidence="1">
    <location>
        <position position="67"/>
    </location>
    <ligand>
        <name>substrate</name>
    </ligand>
</feature>
<feature type="binding site" evidence="1">
    <location>
        <position position="68"/>
    </location>
    <ligand>
        <name>substrate</name>
    </ligand>
</feature>
<feature type="binding site" evidence="1">
    <location>
        <position position="69"/>
    </location>
    <ligand>
        <name>substrate</name>
    </ligand>
</feature>
<feature type="binding site" evidence="1">
    <location>
        <position position="88"/>
    </location>
    <ligand>
        <name>substrate</name>
    </ligand>
</feature>
<feature type="binding site" evidence="1">
    <location>
        <position position="122"/>
    </location>
    <ligand>
        <name>substrate</name>
    </ligand>
</feature>
<feature type="binding site" evidence="1">
    <location>
        <position position="157"/>
    </location>
    <ligand>
        <name>substrate</name>
    </ligand>
</feature>
<feature type="binding site" evidence="1">
    <location>
        <position position="168"/>
    </location>
    <ligand>
        <name>Mg(2+)</name>
        <dbReference type="ChEBI" id="CHEBI:18420"/>
    </ligand>
</feature>
<gene>
    <name type="primary">Nt5m</name>
    <name type="synonym">Dnt2</name>
</gene>
<protein>
    <recommendedName>
        <fullName>5'(3')-deoxyribonucleotidase, mitochondrial</fullName>
        <shortName>5',3'-nucleotidase, mitochondrial</shortName>
        <ecNumber>3.1.3.-</ecNumber>
    </recommendedName>
    <alternativeName>
        <fullName>Deoxy-5'-nucleotidase 2</fullName>
        <shortName>dNT-2</shortName>
    </alternativeName>
</protein>
<comment type="function">
    <text evidence="3">Dephosphorylates specifically the 5' and 2'(3')-phosphates of uracil and thymine deoxyribonucleotides, and so protects mitochondrial DNA replication from excess dTTP. Has only marginal activity towards dIMP and dGMP.</text>
</comment>
<comment type="cofactor">
    <cofactor>
        <name>Mg(2+)</name>
        <dbReference type="ChEBI" id="CHEBI:18420"/>
    </cofactor>
</comment>
<comment type="subunit">
    <text evidence="4">Homodimer.</text>
</comment>
<comment type="subcellular location">
    <subcellularLocation>
        <location evidence="1">Mitochondrion</location>
    </subcellularLocation>
</comment>
<comment type="similarity">
    <text evidence="4">Belongs to the 5'(3')-deoxyribonucleotidase family.</text>
</comment>
<name>NT5M_MOUSE</name>
<accession>Q8VCE6</accession>
<sequence length="220" mass="25602">MHRLRGCCARPRGAPLRAERSRASSRALRVLVDMDGVLADFEGGFLRKFRARFPDLPFVALEDRRGFWVSEQYGRLQPGLSEKAISIWESKDFFFELEPLPGAVEAVKQMANLQNTDVFICTSPIKMFKYCPYEKYAWVEKHFGPDFLEQIVLTRDKTVISADLLIDDRPDITGAEPHPSWEHILFTSCHNYHLQLQPPRRRLHSWADDWKAILDSKRLR</sequence>
<dbReference type="EC" id="3.1.3.-"/>
<dbReference type="EMBL" id="AY061970">
    <property type="protein sequence ID" value="AAL35749.1"/>
    <property type="molecule type" value="mRNA"/>
</dbReference>
<dbReference type="EMBL" id="BK000190">
    <property type="protein sequence ID" value="DAA00068.1"/>
    <property type="molecule type" value="mRNA"/>
</dbReference>
<dbReference type="EMBL" id="BC020084">
    <property type="protein sequence ID" value="AAH20084.1"/>
    <property type="molecule type" value="mRNA"/>
</dbReference>
<dbReference type="CCDS" id="CCDS24779.1"/>
<dbReference type="RefSeq" id="NP_598790.1">
    <property type="nucleotide sequence ID" value="NM_134029.3"/>
</dbReference>
<dbReference type="SMR" id="Q8VCE6"/>
<dbReference type="FunCoup" id="Q8VCE6">
    <property type="interactions" value="670"/>
</dbReference>
<dbReference type="STRING" id="10090.ENSMUSP00000099756"/>
<dbReference type="PhosphoSitePlus" id="Q8VCE6"/>
<dbReference type="PaxDb" id="10090-ENSMUSP00000099756"/>
<dbReference type="PeptideAtlas" id="Q8VCE6"/>
<dbReference type="ProteomicsDB" id="253030"/>
<dbReference type="Antibodypedia" id="25442">
    <property type="antibodies" value="90 antibodies from 19 providers"/>
</dbReference>
<dbReference type="DNASU" id="103850"/>
<dbReference type="Ensembl" id="ENSMUST00000102695.4">
    <property type="protein sequence ID" value="ENSMUSP00000099756.4"/>
    <property type="gene ID" value="ENSMUSG00000032615.15"/>
</dbReference>
<dbReference type="GeneID" id="103850"/>
<dbReference type="KEGG" id="mmu:103850"/>
<dbReference type="UCSC" id="uc007jfb.1">
    <property type="organism name" value="mouse"/>
</dbReference>
<dbReference type="AGR" id="MGI:1917127"/>
<dbReference type="CTD" id="56953"/>
<dbReference type="MGI" id="MGI:1917127">
    <property type="gene designation" value="Nt5m"/>
</dbReference>
<dbReference type="VEuPathDB" id="HostDB:ENSMUSG00000032615"/>
<dbReference type="eggNOG" id="ENOG502QPWJ">
    <property type="taxonomic scope" value="Eukaryota"/>
</dbReference>
<dbReference type="GeneTree" id="ENSGT00390000011596"/>
<dbReference type="HOGENOM" id="CLU_100259_0_0_1"/>
<dbReference type="InParanoid" id="Q8VCE6"/>
<dbReference type="OMA" id="VLFTSCH"/>
<dbReference type="OrthoDB" id="32792at9989"/>
<dbReference type="PhylomeDB" id="Q8VCE6"/>
<dbReference type="TreeFam" id="TF331117"/>
<dbReference type="Reactome" id="R-MMU-73621">
    <property type="pathway name" value="Pyrimidine catabolism"/>
</dbReference>
<dbReference type="SABIO-RK" id="Q8VCE6"/>
<dbReference type="BioGRID-ORCS" id="103850">
    <property type="hits" value="3 hits in 80 CRISPR screens"/>
</dbReference>
<dbReference type="ChiTaRS" id="Nt5m">
    <property type="organism name" value="mouse"/>
</dbReference>
<dbReference type="PRO" id="PR:Q8VCE6"/>
<dbReference type="Proteomes" id="UP000000589">
    <property type="component" value="Chromosome 11"/>
</dbReference>
<dbReference type="RNAct" id="Q8VCE6">
    <property type="molecule type" value="protein"/>
</dbReference>
<dbReference type="Bgee" id="ENSMUSG00000032615">
    <property type="expression patterns" value="Expressed in spermatocyte and 257 other cell types or tissues"/>
</dbReference>
<dbReference type="GO" id="GO:0005739">
    <property type="term" value="C:mitochondrion"/>
    <property type="evidence" value="ECO:0007005"/>
    <property type="project" value="MGI"/>
</dbReference>
<dbReference type="GO" id="GO:0008253">
    <property type="term" value="F:5'-nucleotidase activity"/>
    <property type="evidence" value="ECO:0000314"/>
    <property type="project" value="MGI"/>
</dbReference>
<dbReference type="GO" id="GO:0046872">
    <property type="term" value="F:metal ion binding"/>
    <property type="evidence" value="ECO:0007669"/>
    <property type="project" value="UniProtKB-KW"/>
</dbReference>
<dbReference type="GO" id="GO:0000166">
    <property type="term" value="F:nucleotide binding"/>
    <property type="evidence" value="ECO:0007669"/>
    <property type="project" value="UniProtKB-KW"/>
</dbReference>
<dbReference type="GO" id="GO:0046079">
    <property type="term" value="P:dUMP catabolic process"/>
    <property type="evidence" value="ECO:0000314"/>
    <property type="project" value="MGI"/>
</dbReference>
<dbReference type="CDD" id="cd02587">
    <property type="entry name" value="HAD_5-3dNT"/>
    <property type="match status" value="1"/>
</dbReference>
<dbReference type="FunFam" id="1.10.40.40:FF:000001">
    <property type="entry name" value="5'(3')-deoxyribonucleotidase, cytosolic type"/>
    <property type="match status" value="1"/>
</dbReference>
<dbReference type="FunFam" id="3.40.50.1000:FF:000133">
    <property type="entry name" value="5'(3')-deoxyribonucleotidase, cytosolic type"/>
    <property type="match status" value="1"/>
</dbReference>
<dbReference type="Gene3D" id="1.10.40.40">
    <property type="entry name" value="Deoxyribonucleotidase, domain 2"/>
    <property type="match status" value="1"/>
</dbReference>
<dbReference type="Gene3D" id="3.40.50.1000">
    <property type="entry name" value="HAD superfamily/HAD-like"/>
    <property type="match status" value="1"/>
</dbReference>
<dbReference type="InterPro" id="IPR010708">
    <property type="entry name" value="5'(3')-deoxyribonucleotidase"/>
</dbReference>
<dbReference type="InterPro" id="IPR036412">
    <property type="entry name" value="HAD-like_sf"/>
</dbReference>
<dbReference type="InterPro" id="IPR023214">
    <property type="entry name" value="HAD_sf"/>
</dbReference>
<dbReference type="PANTHER" id="PTHR16504">
    <property type="entry name" value="5'(3')-DEOXYRIBONUCLEOTIDASE"/>
    <property type="match status" value="1"/>
</dbReference>
<dbReference type="PANTHER" id="PTHR16504:SF6">
    <property type="entry name" value="5'(3')-DEOXYRIBONUCLEOTIDASE, MITOCHONDRIAL"/>
    <property type="match status" value="1"/>
</dbReference>
<dbReference type="Pfam" id="PF06941">
    <property type="entry name" value="NT5C"/>
    <property type="match status" value="1"/>
</dbReference>
<dbReference type="SFLD" id="SFLDG01145">
    <property type="entry name" value="C1.2.1"/>
    <property type="match status" value="1"/>
</dbReference>
<dbReference type="SFLD" id="SFLDS00003">
    <property type="entry name" value="Haloacid_Dehalogenase"/>
    <property type="match status" value="1"/>
</dbReference>
<dbReference type="SUPFAM" id="SSF56784">
    <property type="entry name" value="HAD-like"/>
    <property type="match status" value="1"/>
</dbReference>
<evidence type="ECO:0000250" key="1"/>
<evidence type="ECO:0000255" key="2"/>
<evidence type="ECO:0000269" key="3">
    <source>
    </source>
</evidence>
<evidence type="ECO:0000305" key="4"/>
<proteinExistence type="evidence at protein level"/>